<name>POXIN_CWPXB</name>
<feature type="chain" id="PRO_0000446973" description="Poxin-Schlafen">
    <location>
        <begin position="1"/>
        <end position="505"/>
    </location>
</feature>
<feature type="region of interest" description="Poxin-like" evidence="1">
    <location>
        <begin position="1"/>
        <end position="238"/>
    </location>
</feature>
<feature type="region of interest" description="Schlafen-like" evidence="1">
    <location>
        <begin position="239"/>
        <end position="505"/>
    </location>
</feature>
<feature type="active site" description="Proton donor" evidence="1">
    <location>
        <position position="17"/>
    </location>
</feature>
<feature type="active site" description="Shared with catalytic histidine of dimeric partner" evidence="1">
    <location>
        <position position="138"/>
    </location>
</feature>
<feature type="active site" description="Proton acceptor; shared with catalytic histidine of dimeric partner" evidence="1">
    <location>
        <position position="142"/>
    </location>
</feature>
<feature type="site" description="Substrate binding" evidence="1">
    <location>
        <position position="60"/>
    </location>
</feature>
<feature type="site" description="Substrate binding" evidence="1">
    <location>
        <position position="105"/>
    </location>
</feature>
<feature type="site" description="Substrate binding" evidence="1">
    <location>
        <position position="149"/>
    </location>
</feature>
<feature type="site" description="Substrate binding" evidence="1">
    <location>
        <position position="169"/>
    </location>
</feature>
<feature type="site" description="Substrate binding" evidence="1">
    <location>
        <position position="182"/>
    </location>
</feature>
<feature type="site" description="Substrate binding" evidence="1">
    <location>
        <position position="184"/>
    </location>
</feature>
<feature type="site" description="Substrate binding" evidence="1">
    <location>
        <position position="186"/>
    </location>
</feature>
<dbReference type="EC" id="3.1.-.-" evidence="1 2"/>
<dbReference type="EMBL" id="AF482758">
    <property type="protein sequence ID" value="AAM13636.1"/>
    <property type="molecule type" value="Genomic_DNA"/>
</dbReference>
<dbReference type="SMR" id="Q8QMP8"/>
<dbReference type="KEGG" id="vg:1486076"/>
<dbReference type="Proteomes" id="UP000152733">
    <property type="component" value="Segment"/>
</dbReference>
<dbReference type="GO" id="GO:0061507">
    <property type="term" value="F:2',3'-cyclic GMP-AMP binding"/>
    <property type="evidence" value="ECO:0007669"/>
    <property type="project" value="UniProtKB-UniRule"/>
</dbReference>
<dbReference type="GO" id="GO:0004518">
    <property type="term" value="F:nuclease activity"/>
    <property type="evidence" value="ECO:0007669"/>
    <property type="project" value="UniProtKB-UniRule"/>
</dbReference>
<dbReference type="GO" id="GO:0052170">
    <property type="term" value="P:symbiont-mediated suppression of host innate immune response"/>
    <property type="evidence" value="ECO:0007669"/>
    <property type="project" value="UniProtKB-UniRule"/>
</dbReference>
<dbReference type="Gene3D" id="3.30.950.30">
    <property type="entry name" value="Schlafen, AAA domain"/>
    <property type="match status" value="1"/>
</dbReference>
<dbReference type="HAMAP" id="MF_04143">
    <property type="entry name" value="Poxins"/>
    <property type="match status" value="1"/>
</dbReference>
<dbReference type="InterPro" id="IPR031450">
    <property type="entry name" value="Poxin-SLFN/SLFN_N"/>
</dbReference>
<dbReference type="InterPro" id="IPR006853">
    <property type="entry name" value="Poxin_vir"/>
</dbReference>
<dbReference type="InterPro" id="IPR029684">
    <property type="entry name" value="Schlafen"/>
</dbReference>
<dbReference type="InterPro" id="IPR007421">
    <property type="entry name" value="Schlafen_AlbA_2_dom"/>
</dbReference>
<dbReference type="InterPro" id="IPR038461">
    <property type="entry name" value="Schlafen_AlbA_2_dom_sf"/>
</dbReference>
<dbReference type="PANTHER" id="PTHR12155:SF2">
    <property type="entry name" value="RIBONUCLEASE SLFN12"/>
    <property type="match status" value="1"/>
</dbReference>
<dbReference type="PANTHER" id="PTHR12155">
    <property type="entry name" value="SCHLAFEN"/>
    <property type="match status" value="1"/>
</dbReference>
<dbReference type="Pfam" id="PF17057">
    <property type="entry name" value="B3R"/>
    <property type="match status" value="1"/>
</dbReference>
<dbReference type="Pfam" id="PF04766">
    <property type="entry name" value="Baculo_p26"/>
    <property type="match status" value="1"/>
</dbReference>
<dbReference type="Pfam" id="PF04326">
    <property type="entry name" value="SLFN_AlbA_2"/>
    <property type="match status" value="1"/>
</dbReference>
<reference key="1">
    <citation type="journal article" date="1982" name="Proc. Natl. Acad. Sci. U.S.A.">
        <title>Sequence of terminal regions of cowpox virus DNA: arrangement of repeated and unique sequence elements.</title>
        <authorList>
            <person name="Pickup D.J."/>
            <person name="Bastia D."/>
            <person name="Stone H.O."/>
            <person name="Joklik W.K."/>
        </authorList>
    </citation>
    <scope>NUCLEOTIDE SEQUENCE [LARGE SCALE GENOMIC DNA]</scope>
</reference>
<reference key="2">
    <citation type="journal article" date="1990" name="Virology">
        <title>Transcription of orthopoxvirus telomeres at late times during infection.</title>
        <authorList>
            <person name="Parsons B.L."/>
            <person name="Pickup D.J."/>
        </authorList>
    </citation>
    <scope>NUCLEOTIDE SEQUENCE [LARGE SCALE GENOMIC DNA]</scope>
</reference>
<reference key="3">
    <citation type="journal article" date="1991" name="Virology">
        <title>Transcription of the terminal loop region of vaccinia virus DNA is initiated from the telomere sequences directing DNA resolution.</title>
        <authorList>
            <person name="Hu F.Q."/>
            <person name="Pickup D.J."/>
        </authorList>
    </citation>
    <scope>NUCLEOTIDE SEQUENCE [LARGE SCALE GENOMIC DNA]</scope>
</reference>
<reference key="4">
    <citation type="journal article" date="1994" name="Virology">
        <title>Cowpox virus contains two copies of an early gene encoding a soluble secreted form of the type II TNF receptor.</title>
        <authorList>
            <person name="Hu F.Q."/>
            <person name="Smith C.A."/>
            <person name="Pickup D.J."/>
        </authorList>
    </citation>
    <scope>NUCLEOTIDE SEQUENCE [LARGE SCALE GENOMIC DNA]</scope>
</reference>
<reference key="5">
    <citation type="journal article" date="2019" name="Nature">
        <title>Viral and metazoan poxins are cGAMP-specific nucleases that restrict cGAS-STING signalling.</title>
        <authorList>
            <person name="Eaglesham J.B."/>
            <person name="Pan Y."/>
            <person name="Kupper T.S."/>
            <person name="Kranzusch P.J."/>
        </authorList>
    </citation>
    <scope>FUNCTION</scope>
    <scope>CATALYTIC ACTIVITY</scope>
</reference>
<gene>
    <name type="primary">OPG188</name>
</gene>
<organismHost>
    <name type="scientific">Bos taurus</name>
    <name type="common">Bovine</name>
    <dbReference type="NCBI Taxonomy" id="9913"/>
</organismHost>
<organismHost>
    <name type="scientific">Felis catus</name>
    <name type="common">Cat</name>
    <name type="synonym">Felis silvestris catus</name>
    <dbReference type="NCBI Taxonomy" id="9685"/>
</organismHost>
<organismHost>
    <name type="scientific">Homo sapiens</name>
    <name type="common">Human</name>
    <dbReference type="NCBI Taxonomy" id="9606"/>
</organismHost>
<organismHost>
    <name type="scientific">Loxodonta africana</name>
    <name type="common">African elephant</name>
    <dbReference type="NCBI Taxonomy" id="9785"/>
</organismHost>
<organismHost>
    <name type="scientific">Microtus agrestis</name>
    <name type="common">Short-tailed field vole</name>
    <dbReference type="NCBI Taxonomy" id="29092"/>
</organismHost>
<organismHost>
    <name type="scientific">Mus musculus</name>
    <name type="common">Mouse</name>
    <dbReference type="NCBI Taxonomy" id="10090"/>
</organismHost>
<organismHost>
    <name type="scientific">Myodes glareolus</name>
    <name type="common">Bank vole</name>
    <name type="synonym">Clethrionomys glareolus</name>
    <dbReference type="NCBI Taxonomy" id="447135"/>
</organismHost>
<organism>
    <name type="scientific">Cowpox virus (strain Brighton Red)</name>
    <name type="common">CPV</name>
    <dbReference type="NCBI Taxonomy" id="265872"/>
    <lineage>
        <taxon>Viruses</taxon>
        <taxon>Varidnaviria</taxon>
        <taxon>Bamfordvirae</taxon>
        <taxon>Nucleocytoviricota</taxon>
        <taxon>Pokkesviricetes</taxon>
        <taxon>Chitovirales</taxon>
        <taxon>Poxviridae</taxon>
        <taxon>Chordopoxvirinae</taxon>
        <taxon>Orthopoxvirus</taxon>
        <taxon>Cowpox virus</taxon>
    </lineage>
</organism>
<keyword id="KW-0244">Early protein</keyword>
<keyword id="KW-0378">Hydrolase</keyword>
<keyword id="KW-0540">Nuclease</keyword>
<protein>
    <recommendedName>
        <fullName evidence="1 3">Poxin-Schlafen</fullName>
        <ecNumber evidence="1 2">3.1.-.-</ecNumber>
    </recommendedName>
</protein>
<comment type="function">
    <text evidence="1 2">Nuclease that is responsible for viral evasion of host cGAS-STING innate immunity. Cleaves 2',3'-cGAMP which is produced by host cGAS following recognition of cytosolic DNA and blocks the subsequent 2',3'-cGAMP-mediated activation of TMEM173/STING, which normally spreads to adjacent cells and activates the interferon and NF-kappa-B immune responses.</text>
</comment>
<comment type="catalytic activity">
    <reaction evidence="1 2">
        <text>2',3'-cGAMP + H2O = Gp(2'-5')Ap(3') + H(+)</text>
        <dbReference type="Rhea" id="RHEA:59472"/>
        <dbReference type="ChEBI" id="CHEBI:15377"/>
        <dbReference type="ChEBI" id="CHEBI:15378"/>
        <dbReference type="ChEBI" id="CHEBI:143093"/>
        <dbReference type="ChEBI" id="CHEBI:143098"/>
    </reaction>
    <physiologicalReaction direction="left-to-right" evidence="1 5">
        <dbReference type="Rhea" id="RHEA:59473"/>
    </physiologicalReaction>
</comment>
<comment type="subunit">
    <text evidence="1">Homodimer.</text>
</comment>
<comment type="induction">
    <text>Expressed in the early phase of the viral replicative cycle.</text>
</comment>
<comment type="domain">
    <text evidence="1">The substrate binding site is formed by the N-terminus of a monomer and the C-terminus of the opposite monomer.</text>
</comment>
<comment type="miscellaneous">
    <text evidence="4">In some poxviruses, the poxin is expressed as a poxin-schlafen fusion protein.</text>
</comment>
<comment type="similarity">
    <text evidence="1">In the N-terminal section; belongs to the poxin family.</text>
</comment>
<comment type="similarity">
    <text evidence="1">In the C-terminal section; belongs to the Schlafen protein family. Subgroup poxviridae B3 subfamily.</text>
</comment>
<accession>Q8QMP8</accession>
<evidence type="ECO:0000255" key="1">
    <source>
        <dbReference type="HAMAP-Rule" id="MF_04143"/>
    </source>
</evidence>
<evidence type="ECO:0000269" key="2">
    <source>
    </source>
</evidence>
<evidence type="ECO:0000303" key="3">
    <source>
    </source>
</evidence>
<evidence type="ECO:0000305" key="4"/>
<evidence type="ECO:0000305" key="5">
    <source>
    </source>
</evidence>
<proteinExistence type="evidence at protein level"/>
<sequence>MAMFYAHAFGGYDENLHAFPGISSTVANDVRKYSVVSVYNNKYDIVKDKYMWCYSYVNKRYIGALLPMFECNEYLQIGDPIHDLEGNQISIVTYRHKNYYALSGIGYESLDLCLEGVGIHHHTLEAGNAVYGKVQHDYSTIKEKAKEMNSLSPGPIIDYHVWIGDCVCQVTAVDVHGKEIMRMRFKKGAVLPIPNLVKVKLGEENDTVNLSTSISALLNSGGGTIEVTSKEERVDYVLMKRLESIRHLWSVVYDHFDVVNGKERCYVHMHSSNQSPMLSTVKTNLYMKTMGACLQMDYMEALEYLSELKESGGRSPRPELPEFEYPDGVEDAGSIERLAEEFFSRSELQADEPVNFCNSINVKHTSVSAKQLRTRIRQQLPSILSSFANTDGGYLFIGVDNNTHKVVGFTVGQDYLKLVESDIEKYIKRLRVVHFCEKKEDIKYACRFIKVYKPGEETTSTYVCAIKVERCCCAVFADWPESWYMDTSGSMKKYSPDEWVSHIKF</sequence>